<feature type="chain" id="PRO_0000097959" description="Sec-independent protein translocase protein TatA">
    <location>
        <begin position="1"/>
        <end position="84"/>
    </location>
</feature>
<feature type="transmembrane region" description="Helical" evidence="1">
    <location>
        <begin position="1"/>
        <end position="21"/>
    </location>
</feature>
<feature type="region of interest" description="Disordered" evidence="2">
    <location>
        <begin position="42"/>
        <end position="84"/>
    </location>
</feature>
<feature type="compositionally biased region" description="Basic and acidic residues" evidence="2">
    <location>
        <begin position="42"/>
        <end position="55"/>
    </location>
</feature>
<feature type="compositionally biased region" description="Basic and acidic residues" evidence="2">
    <location>
        <begin position="64"/>
        <end position="84"/>
    </location>
</feature>
<sequence>MGGISIWQLLIVAVIVVLLFGTKKLGSIGSDLGASIKGFKKAMSDDDAKQDKTSQDADFTAKSIADKQGEAKKEDAKSQDKEQV</sequence>
<proteinExistence type="inferred from homology"/>
<accession>P0A2H3</accession>
<accession>P57045</accession>
<reference key="1">
    <citation type="journal article" date="2001" name="Nature">
        <title>Complete genome sequence of Salmonella enterica serovar Typhimurium LT2.</title>
        <authorList>
            <person name="McClelland M."/>
            <person name="Sanderson K.E."/>
            <person name="Spieth J."/>
            <person name="Clifton S.W."/>
            <person name="Latreille P."/>
            <person name="Courtney L."/>
            <person name="Porwollik S."/>
            <person name="Ali J."/>
            <person name="Dante M."/>
            <person name="Du F."/>
            <person name="Hou S."/>
            <person name="Layman D."/>
            <person name="Leonard S."/>
            <person name="Nguyen C."/>
            <person name="Scott K."/>
            <person name="Holmes A."/>
            <person name="Grewal N."/>
            <person name="Mulvaney E."/>
            <person name="Ryan E."/>
            <person name="Sun H."/>
            <person name="Florea L."/>
            <person name="Miller W."/>
            <person name="Stoneking T."/>
            <person name="Nhan M."/>
            <person name="Waterston R."/>
            <person name="Wilson R.K."/>
        </authorList>
    </citation>
    <scope>NUCLEOTIDE SEQUENCE [LARGE SCALE GENOMIC DNA]</scope>
    <source>
        <strain>LT2 / SGSC1412 / ATCC 700720</strain>
    </source>
</reference>
<comment type="function">
    <text evidence="1">Part of the twin-arginine translocation (Tat) system that transports large folded proteins containing a characteristic twin-arginine motif in their signal peptide across membranes. TatA could form the protein-conducting channel of the Tat system.</text>
</comment>
<comment type="subunit">
    <text evidence="1">The Tat system comprises two distinct complexes: a TatABC complex, containing multiple copies of TatA, TatB and TatC subunits, and a separate TatA complex, containing only TatA subunits. Substrates initially bind to the TatABC complex, which probably triggers association of the separate TatA complex to form the active translocon.</text>
</comment>
<comment type="subcellular location">
    <subcellularLocation>
        <location evidence="1">Cell inner membrane</location>
        <topology evidence="1">Single-pass membrane protein</topology>
    </subcellularLocation>
</comment>
<comment type="similarity">
    <text evidence="1">Belongs to the TatA/E family.</text>
</comment>
<dbReference type="EMBL" id="AF233324">
    <property type="protein sequence ID" value="AAF33419.1"/>
    <property type="molecule type" value="Genomic_DNA"/>
</dbReference>
<dbReference type="EMBL" id="AE006468">
    <property type="protein sequence ID" value="AAL22817.1"/>
    <property type="molecule type" value="Genomic_DNA"/>
</dbReference>
<dbReference type="RefSeq" id="NP_462858.1">
    <property type="nucleotide sequence ID" value="NC_003197.2"/>
</dbReference>
<dbReference type="RefSeq" id="WP_000508972.1">
    <property type="nucleotide sequence ID" value="NC_003197.2"/>
</dbReference>
<dbReference type="SMR" id="P0A2H3"/>
<dbReference type="STRING" id="99287.STM3973"/>
<dbReference type="PaxDb" id="99287-STM3973"/>
<dbReference type="GeneID" id="1255499"/>
<dbReference type="GeneID" id="66758253"/>
<dbReference type="KEGG" id="stm:STM3973"/>
<dbReference type="PATRIC" id="fig|99287.12.peg.4192"/>
<dbReference type="HOGENOM" id="CLU_086034_5_1_6"/>
<dbReference type="OMA" id="KAMGDDQ"/>
<dbReference type="PhylomeDB" id="P0A2H3"/>
<dbReference type="BioCyc" id="SENT99287:STM3973-MONOMER"/>
<dbReference type="Proteomes" id="UP000001014">
    <property type="component" value="Chromosome"/>
</dbReference>
<dbReference type="GO" id="GO:0033281">
    <property type="term" value="C:TAT protein transport complex"/>
    <property type="evidence" value="ECO:0007669"/>
    <property type="project" value="UniProtKB-UniRule"/>
</dbReference>
<dbReference type="GO" id="GO:0008320">
    <property type="term" value="F:protein transmembrane transporter activity"/>
    <property type="evidence" value="ECO:0007669"/>
    <property type="project" value="UniProtKB-UniRule"/>
</dbReference>
<dbReference type="GO" id="GO:0043953">
    <property type="term" value="P:protein transport by the Tat complex"/>
    <property type="evidence" value="ECO:0007669"/>
    <property type="project" value="UniProtKB-UniRule"/>
</dbReference>
<dbReference type="FunFam" id="1.20.5.3310:FF:000001">
    <property type="entry name" value="Probable Sec-independent protein translocase protein TatE"/>
    <property type="match status" value="1"/>
</dbReference>
<dbReference type="Gene3D" id="1.20.5.3310">
    <property type="match status" value="1"/>
</dbReference>
<dbReference type="HAMAP" id="MF_00236">
    <property type="entry name" value="TatA_E"/>
    <property type="match status" value="1"/>
</dbReference>
<dbReference type="InterPro" id="IPR003369">
    <property type="entry name" value="TatA/B/E"/>
</dbReference>
<dbReference type="InterPro" id="IPR006312">
    <property type="entry name" value="TatA/E"/>
</dbReference>
<dbReference type="NCBIfam" id="NF002922">
    <property type="entry name" value="PRK03554.1"/>
    <property type="match status" value="1"/>
</dbReference>
<dbReference type="NCBIfam" id="TIGR01411">
    <property type="entry name" value="tatAE"/>
    <property type="match status" value="1"/>
</dbReference>
<dbReference type="PANTHER" id="PTHR42982">
    <property type="entry name" value="SEC-INDEPENDENT PROTEIN TRANSLOCASE PROTEIN TATA"/>
    <property type="match status" value="1"/>
</dbReference>
<dbReference type="PANTHER" id="PTHR42982:SF1">
    <property type="entry name" value="SEC-INDEPENDENT PROTEIN TRANSLOCASE PROTEIN TATA"/>
    <property type="match status" value="1"/>
</dbReference>
<dbReference type="Pfam" id="PF02416">
    <property type="entry name" value="TatA_B_E"/>
    <property type="match status" value="1"/>
</dbReference>
<protein>
    <recommendedName>
        <fullName evidence="1">Sec-independent protein translocase protein TatA</fullName>
    </recommendedName>
</protein>
<name>TATA_SALTY</name>
<organism>
    <name type="scientific">Salmonella typhimurium (strain LT2 / SGSC1412 / ATCC 700720)</name>
    <dbReference type="NCBI Taxonomy" id="99287"/>
    <lineage>
        <taxon>Bacteria</taxon>
        <taxon>Pseudomonadati</taxon>
        <taxon>Pseudomonadota</taxon>
        <taxon>Gammaproteobacteria</taxon>
        <taxon>Enterobacterales</taxon>
        <taxon>Enterobacteriaceae</taxon>
        <taxon>Salmonella</taxon>
    </lineage>
</organism>
<keyword id="KW-0997">Cell inner membrane</keyword>
<keyword id="KW-1003">Cell membrane</keyword>
<keyword id="KW-0472">Membrane</keyword>
<keyword id="KW-0653">Protein transport</keyword>
<keyword id="KW-1185">Reference proteome</keyword>
<keyword id="KW-0811">Translocation</keyword>
<keyword id="KW-0812">Transmembrane</keyword>
<keyword id="KW-1133">Transmembrane helix</keyword>
<keyword id="KW-0813">Transport</keyword>
<evidence type="ECO:0000255" key="1">
    <source>
        <dbReference type="HAMAP-Rule" id="MF_00236"/>
    </source>
</evidence>
<evidence type="ECO:0000256" key="2">
    <source>
        <dbReference type="SAM" id="MobiDB-lite"/>
    </source>
</evidence>
<gene>
    <name evidence="1" type="primary">tatA</name>
    <name type="ordered locus">STM3973</name>
    <name type="ORF">STMD1.16</name>
</gene>